<keyword id="KW-0067">ATP-binding</keyword>
<keyword id="KW-0115">cAMP biosynthesis</keyword>
<keyword id="KW-0963">Cytoplasm</keyword>
<keyword id="KW-0456">Lyase</keyword>
<keyword id="KW-0547">Nucleotide-binding</keyword>
<keyword id="KW-0597">Phosphoprotein</keyword>
<keyword id="KW-1185">Reference proteome</keyword>
<feature type="chain" id="PRO_0000195673" description="Adenylate cyclase">
    <location>
        <begin position="1"/>
        <end position="848"/>
    </location>
</feature>
<feature type="region of interest" description="Catalytic">
    <location>
        <begin position="1"/>
        <end position="535"/>
    </location>
</feature>
<feature type="region of interest" description="Regulatory">
    <location>
        <begin position="541"/>
        <end position="848"/>
    </location>
</feature>
<feature type="modified residue" description="Phosphohistidine; by CRR" evidence="1">
    <location>
        <position position="609"/>
    </location>
</feature>
<feature type="sequence conflict" description="In Ref. 2; no nucleotide entry." evidence="2" ref="2">
    <original>S</original>
    <variation>T</variation>
    <location>
        <position position="247"/>
    </location>
</feature>
<feature type="sequence conflict" description="In Ref. 2; no nucleotide entry." evidence="2" ref="2">
    <original>R</original>
    <variation>G</variation>
    <location>
        <position position="321"/>
    </location>
</feature>
<feature type="sequence conflict" description="In Ref. 2; no nucleotide entry." evidence="2" ref="2">
    <original>I</original>
    <variation>N</variation>
    <location>
        <position position="398"/>
    </location>
</feature>
<dbReference type="EC" id="4.6.1.1"/>
<dbReference type="EMBL" id="AF233324">
    <property type="protein sequence ID" value="AAF33452.1"/>
    <property type="molecule type" value="Genomic_DNA"/>
</dbReference>
<dbReference type="EMBL" id="AE006468">
    <property type="protein sequence ID" value="AAL22784.1"/>
    <property type="molecule type" value="Genomic_DNA"/>
</dbReference>
<dbReference type="EMBL" id="X55783">
    <property type="protein sequence ID" value="CAA39304.1"/>
    <property type="molecule type" value="Genomic_DNA"/>
</dbReference>
<dbReference type="PIR" id="B31974">
    <property type="entry name" value="B31974"/>
</dbReference>
<dbReference type="RefSeq" id="NP_462825.1">
    <property type="nucleotide sequence ID" value="NC_003197.2"/>
</dbReference>
<dbReference type="RefSeq" id="WP_000281718.1">
    <property type="nucleotide sequence ID" value="NC_003197.2"/>
</dbReference>
<dbReference type="STRING" id="99287.STM3939"/>
<dbReference type="PaxDb" id="99287-STM3939"/>
<dbReference type="GeneID" id="1255465"/>
<dbReference type="KEGG" id="stm:STM3939"/>
<dbReference type="PATRIC" id="fig|99287.12.peg.4156"/>
<dbReference type="HOGENOM" id="CLU_013280_0_0_6"/>
<dbReference type="OMA" id="YDDYVMS"/>
<dbReference type="PhylomeDB" id="P0A1A7"/>
<dbReference type="BioCyc" id="SENT99287:STM3939-MONOMER"/>
<dbReference type="Proteomes" id="UP000001014">
    <property type="component" value="Chromosome"/>
</dbReference>
<dbReference type="GO" id="GO:0005737">
    <property type="term" value="C:cytoplasm"/>
    <property type="evidence" value="ECO:0007669"/>
    <property type="project" value="UniProtKB-SubCell"/>
</dbReference>
<dbReference type="GO" id="GO:0004016">
    <property type="term" value="F:adenylate cyclase activity"/>
    <property type="evidence" value="ECO:0000318"/>
    <property type="project" value="GO_Central"/>
</dbReference>
<dbReference type="GO" id="GO:0005524">
    <property type="term" value="F:ATP binding"/>
    <property type="evidence" value="ECO:0007669"/>
    <property type="project" value="UniProtKB-KW"/>
</dbReference>
<dbReference type="GO" id="GO:0006171">
    <property type="term" value="P:cAMP biosynthetic process"/>
    <property type="evidence" value="ECO:0007669"/>
    <property type="project" value="UniProtKB-KW"/>
</dbReference>
<dbReference type="InterPro" id="IPR000274">
    <property type="entry name" value="Adenylate_cyclase_1"/>
</dbReference>
<dbReference type="InterPro" id="IPR024686">
    <property type="entry name" value="Adenylate_cyclase_1_CS"/>
</dbReference>
<dbReference type="InterPro" id="IPR024685">
    <property type="entry name" value="Adenylate_cyclase_1_N"/>
</dbReference>
<dbReference type="NCBIfam" id="NF006977">
    <property type="entry name" value="PRK09450.1-1"/>
    <property type="match status" value="1"/>
</dbReference>
<dbReference type="NCBIfam" id="NF006978">
    <property type="entry name" value="PRK09450.1-2"/>
    <property type="match status" value="1"/>
</dbReference>
<dbReference type="NCBIfam" id="NF006979">
    <property type="entry name" value="PRK09450.1-4"/>
    <property type="match status" value="1"/>
</dbReference>
<dbReference type="PANTHER" id="PTHR38760">
    <property type="entry name" value="ADENYLATE CYCLASE"/>
    <property type="match status" value="1"/>
</dbReference>
<dbReference type="PANTHER" id="PTHR38760:SF1">
    <property type="entry name" value="ADENYLATE CYCLASE"/>
    <property type="match status" value="1"/>
</dbReference>
<dbReference type="Pfam" id="PF12633">
    <property type="entry name" value="Adenyl_cycl_N"/>
    <property type="match status" value="1"/>
</dbReference>
<dbReference type="Pfam" id="PF01295">
    <property type="entry name" value="Adenylate_cycl"/>
    <property type="match status" value="1"/>
</dbReference>
<dbReference type="PIRSF" id="PIRSF001444">
    <property type="entry name" value="Adenylate_cycl"/>
    <property type="match status" value="1"/>
</dbReference>
<dbReference type="PROSITE" id="PS01092">
    <property type="entry name" value="ADENYLATE_CYCLASE_1_1"/>
    <property type="match status" value="1"/>
</dbReference>
<dbReference type="PROSITE" id="PS01093">
    <property type="entry name" value="ADENYLATE_CYCLASE_1_2"/>
    <property type="match status" value="1"/>
</dbReference>
<accession>P0A1A7</accession>
<accession>Q05878</accession>
<comment type="catalytic activity">
    <reaction>
        <text>ATP = 3',5'-cyclic AMP + diphosphate</text>
        <dbReference type="Rhea" id="RHEA:15389"/>
        <dbReference type="ChEBI" id="CHEBI:30616"/>
        <dbReference type="ChEBI" id="CHEBI:33019"/>
        <dbReference type="ChEBI" id="CHEBI:58165"/>
        <dbReference type="EC" id="4.6.1.1"/>
    </reaction>
</comment>
<comment type="activity regulation">
    <text>The regulatory domain is involved in the regulation of cyclase activity by the carbon source. Activated by the PTS system, glucose-specific IIA component (CRR).</text>
</comment>
<comment type="subcellular location">
    <subcellularLocation>
        <location>Cytoplasm</location>
    </subcellularLocation>
</comment>
<comment type="similarity">
    <text evidence="2">Belongs to the adenylyl cyclase class-1 family.</text>
</comment>
<reference key="1">
    <citation type="journal article" date="2001" name="Nature">
        <title>Complete genome sequence of Salmonella enterica serovar Typhimurium LT2.</title>
        <authorList>
            <person name="McClelland M."/>
            <person name="Sanderson K.E."/>
            <person name="Spieth J."/>
            <person name="Clifton S.W."/>
            <person name="Latreille P."/>
            <person name="Courtney L."/>
            <person name="Porwollik S."/>
            <person name="Ali J."/>
            <person name="Dante M."/>
            <person name="Du F."/>
            <person name="Hou S."/>
            <person name="Layman D."/>
            <person name="Leonard S."/>
            <person name="Nguyen C."/>
            <person name="Scott K."/>
            <person name="Holmes A."/>
            <person name="Grewal N."/>
            <person name="Mulvaney E."/>
            <person name="Ryan E."/>
            <person name="Sun H."/>
            <person name="Florea L."/>
            <person name="Miller W."/>
            <person name="Stoneking T."/>
            <person name="Nhan M."/>
            <person name="Waterston R."/>
            <person name="Wilson R.K."/>
        </authorList>
    </citation>
    <scope>NUCLEOTIDE SEQUENCE [LARGE SCALE GENOMIC DNA]</scope>
    <source>
        <strain>LT2 / SGSC1412 / ATCC 700720</strain>
    </source>
</reference>
<reference key="2">
    <citation type="journal article" date="1988" name="J. Biol. Chem.">
        <title>Isolation and characterization of a small catalytic domain released from the adenylate cyclase from Escherichia coli by digestion with trypsin.</title>
        <authorList>
            <person name="Holland M.M."/>
            <person name="Leib T.K."/>
            <person name="Gerlt J.A."/>
        </authorList>
    </citation>
    <scope>NUCLEOTIDE SEQUENCE [GENOMIC DNA] OF 1-419</scope>
</reference>
<reference key="3">
    <citation type="journal article" date="1990" name="Genetics">
        <title>Analysis of sequence elements important for expression and regulation of the adenylate cyclase gene (cya) of Salmonella typhimurium.</title>
        <authorList>
            <person name="Thorner L."/>
            <person name="Fandl J."/>
            <person name="Artz S."/>
        </authorList>
    </citation>
    <scope>NUCLEOTIDE SEQUENCE [GENOMIC DNA] OF 1-28</scope>
    <source>
        <strain>AZ3409</strain>
    </source>
</reference>
<reference key="4">
    <citation type="journal article" date="1993" name="Adv. Second Messenger Phosphoprotein Res.">
        <title>Phylogeny of adenylyl cyclases.</title>
        <authorList>
            <person name="Danchin A."/>
        </authorList>
    </citation>
    <scope>REVIEW</scope>
</reference>
<organism>
    <name type="scientific">Salmonella typhimurium (strain LT2 / SGSC1412 / ATCC 700720)</name>
    <dbReference type="NCBI Taxonomy" id="99287"/>
    <lineage>
        <taxon>Bacteria</taxon>
        <taxon>Pseudomonadati</taxon>
        <taxon>Pseudomonadota</taxon>
        <taxon>Gammaproteobacteria</taxon>
        <taxon>Enterobacterales</taxon>
        <taxon>Enterobacteriaceae</taxon>
        <taxon>Salmonella</taxon>
    </lineage>
</organism>
<evidence type="ECO:0000255" key="1"/>
<evidence type="ECO:0000305" key="2"/>
<gene>
    <name type="primary">cyaA</name>
    <name type="synonym">cya</name>
    <name type="ordered locus">STM3939</name>
    <name type="ORF">STMD1.50</name>
</gene>
<protein>
    <recommendedName>
        <fullName>Adenylate cyclase</fullName>
        <ecNumber>4.6.1.1</ecNumber>
    </recommendedName>
    <alternativeName>
        <fullName>ATP pyrophosphate-lyase</fullName>
    </alternativeName>
    <alternativeName>
        <fullName>Adenylyl cyclase</fullName>
    </alternativeName>
</protein>
<name>CYAA_SALTY</name>
<proteinExistence type="inferred from homology"/>
<sequence>MYLYIETLKQRLDAINQLRVDRALAAMGPAFQQVYSLLPTLLHYHHPLMPGYLDGNVPSGICFYTPDETQRHYLNELELYRGMTPQDPPKGELPITGVYTMGSTSSVGQSCSSDLDIWVCHQSWLDGEERQLLQRKCSLLESWAASLGVEVSFFLIDENRFRHNESGSLGGEDCGSTQHILLLDEFYRTAVRLAGKRILWSMVPCDEEEHYDDYVMTLYAQGVLTPNEWLDLGGLSSLSAEEYFGASLWQLYKSIDSPYKAVLKTLLLEAYSWEYPNPRLLAKDIKQRLHDGEIVSFGLDPYCMMLERVTEYLTAIEDPTRLDLVRRCFYLKVCEKLSRERACVGWRREVLSQLVSEWGWDDARLTMLDNRANWKIDQVREAHNELLDAMMQSYRNLIRFARRNNLSVSASPQDIGVLTRKLYAAFEALPGKVTLVNPQISPDLSEPNLTFIHVPPGRANRSGWYLYNRAPNMDSIISHQPLEYNRYLNKLVAWAWFNGLLTSRTHLFIKGNGIVDLPKLQEMVADVSHHFPLRLPAPTPKALYSPCEIRHLAIIVNLEYDPTAAFRNKVVHFDFRKLDVFSFGEEQNCLIGSIDLLYRNSWNEVRTLHFNGEQAMIEALKTILGKMHQDAAPPDSVEVFCYSQHLRGLIRTRVQQLVSECIELRLSSTRQETGRFKALRVSGQTWGLFFERLNVSVQKLENAIEFYGAISHNKLHGLSVQVETNQVKLPSVVDGFASEGIIQFFFEETGDEKGFNIYILDESNRAEVYHHCEGSKEELVRDVSRFYSSSHDRFTYGSSFINFNLPQFYQIVKTDGRAQVIPFRTQPINTVPPANQDHDAPLLQQYFS</sequence>